<feature type="chain" id="PRO_0000309875" description="Large ribosomal subunit protein uL2">
    <location>
        <begin position="1"/>
        <end position="277"/>
    </location>
</feature>
<feature type="region of interest" description="Disordered" evidence="2">
    <location>
        <begin position="32"/>
        <end position="58"/>
    </location>
</feature>
<feature type="region of interest" description="Disordered" evidence="2">
    <location>
        <begin position="225"/>
        <end position="277"/>
    </location>
</feature>
<feature type="compositionally biased region" description="Basic residues" evidence="2">
    <location>
        <begin position="258"/>
        <end position="277"/>
    </location>
</feature>
<comment type="function">
    <text evidence="1">One of the primary rRNA binding proteins. Required for association of the 30S and 50S subunits to form the 70S ribosome, for tRNA binding and peptide bond formation. It has been suggested to have peptidyltransferase activity; this is somewhat controversial. Makes several contacts with the 16S rRNA in the 70S ribosome.</text>
</comment>
<comment type="subunit">
    <text evidence="1">Part of the 50S ribosomal subunit. Forms a bridge to the 30S subunit in the 70S ribosome.</text>
</comment>
<comment type="similarity">
    <text evidence="1">Belongs to the universal ribosomal protein uL2 family.</text>
</comment>
<sequence>MGIKTYKPKTSSLRYKTTLSFDDLSKGNDPLKSLTKGKKFKSGRDSSGRISIRRRGGGHKRKYRLIDFNRRDKFSIPARVASIEYDPNRSANIALLVYKDGEKRYIISPKDIKVGDVLESGPNAPIKIGNALPLENIPIGRTVHNIELNVGKGGQLVRSAGGYAMILASDGNYVTVKLSSGEVRLIFKKCIATIGEIGNEDYVNVSIGKAGKSRWLGRRPKVRGVAMNPVDHPHGGGEGKTSGGRHPVSPWGQPTKGYKTRKKKRYSDKFIIKRRNK</sequence>
<protein>
    <recommendedName>
        <fullName evidence="1">Large ribosomal subunit protein uL2</fullName>
    </recommendedName>
    <alternativeName>
        <fullName evidence="3">50S ribosomal protein L2</fullName>
    </alternativeName>
</protein>
<dbReference type="EMBL" id="CP000395">
    <property type="protein sequence ID" value="ABH01752.1"/>
    <property type="molecule type" value="Genomic_DNA"/>
</dbReference>
<dbReference type="EMBL" id="CP002933">
    <property type="protein sequence ID" value="AEL69706.1"/>
    <property type="molecule type" value="Genomic_DNA"/>
</dbReference>
<dbReference type="RefSeq" id="WP_011601052.1">
    <property type="nucleotide sequence ID" value="NZ_CP160066.1"/>
</dbReference>
<dbReference type="SMR" id="Q0SN26"/>
<dbReference type="STRING" id="29518.BLA32_01855"/>
<dbReference type="GeneID" id="77265328"/>
<dbReference type="KEGG" id="baf:BAPKO_0509"/>
<dbReference type="KEGG" id="bafz:BafPKo_0498"/>
<dbReference type="PATRIC" id="fig|390236.22.peg.478"/>
<dbReference type="eggNOG" id="COG0090">
    <property type="taxonomic scope" value="Bacteria"/>
</dbReference>
<dbReference type="HOGENOM" id="CLU_036235_2_1_12"/>
<dbReference type="OrthoDB" id="9778722at2"/>
<dbReference type="Proteomes" id="UP000005216">
    <property type="component" value="Chromosome"/>
</dbReference>
<dbReference type="GO" id="GO:0015934">
    <property type="term" value="C:large ribosomal subunit"/>
    <property type="evidence" value="ECO:0007669"/>
    <property type="project" value="InterPro"/>
</dbReference>
<dbReference type="GO" id="GO:0019843">
    <property type="term" value="F:rRNA binding"/>
    <property type="evidence" value="ECO:0007669"/>
    <property type="project" value="UniProtKB-UniRule"/>
</dbReference>
<dbReference type="GO" id="GO:0003735">
    <property type="term" value="F:structural constituent of ribosome"/>
    <property type="evidence" value="ECO:0007669"/>
    <property type="project" value="InterPro"/>
</dbReference>
<dbReference type="GO" id="GO:0016740">
    <property type="term" value="F:transferase activity"/>
    <property type="evidence" value="ECO:0007669"/>
    <property type="project" value="InterPro"/>
</dbReference>
<dbReference type="GO" id="GO:0002181">
    <property type="term" value="P:cytoplasmic translation"/>
    <property type="evidence" value="ECO:0007669"/>
    <property type="project" value="TreeGrafter"/>
</dbReference>
<dbReference type="FunFam" id="2.30.30.30:FF:000001">
    <property type="entry name" value="50S ribosomal protein L2"/>
    <property type="match status" value="1"/>
</dbReference>
<dbReference type="FunFam" id="2.40.50.140:FF:000003">
    <property type="entry name" value="50S ribosomal protein L2"/>
    <property type="match status" value="1"/>
</dbReference>
<dbReference type="FunFam" id="4.10.950.10:FF:000001">
    <property type="entry name" value="50S ribosomal protein L2"/>
    <property type="match status" value="1"/>
</dbReference>
<dbReference type="Gene3D" id="2.30.30.30">
    <property type="match status" value="1"/>
</dbReference>
<dbReference type="Gene3D" id="2.40.50.140">
    <property type="entry name" value="Nucleic acid-binding proteins"/>
    <property type="match status" value="1"/>
</dbReference>
<dbReference type="Gene3D" id="4.10.950.10">
    <property type="entry name" value="Ribosomal protein L2, domain 3"/>
    <property type="match status" value="1"/>
</dbReference>
<dbReference type="HAMAP" id="MF_01320_B">
    <property type="entry name" value="Ribosomal_uL2_B"/>
    <property type="match status" value="1"/>
</dbReference>
<dbReference type="InterPro" id="IPR012340">
    <property type="entry name" value="NA-bd_OB-fold"/>
</dbReference>
<dbReference type="InterPro" id="IPR014722">
    <property type="entry name" value="Rib_uL2_dom2"/>
</dbReference>
<dbReference type="InterPro" id="IPR002171">
    <property type="entry name" value="Ribosomal_uL2"/>
</dbReference>
<dbReference type="InterPro" id="IPR005880">
    <property type="entry name" value="Ribosomal_uL2_bac/org-type"/>
</dbReference>
<dbReference type="InterPro" id="IPR022669">
    <property type="entry name" value="Ribosomal_uL2_C"/>
</dbReference>
<dbReference type="InterPro" id="IPR022671">
    <property type="entry name" value="Ribosomal_uL2_CS"/>
</dbReference>
<dbReference type="InterPro" id="IPR014726">
    <property type="entry name" value="Ribosomal_uL2_dom3"/>
</dbReference>
<dbReference type="InterPro" id="IPR022666">
    <property type="entry name" value="Ribosomal_uL2_RNA-bd_dom"/>
</dbReference>
<dbReference type="InterPro" id="IPR008991">
    <property type="entry name" value="Translation_prot_SH3-like_sf"/>
</dbReference>
<dbReference type="NCBIfam" id="TIGR01171">
    <property type="entry name" value="rplB_bact"/>
    <property type="match status" value="1"/>
</dbReference>
<dbReference type="PANTHER" id="PTHR13691:SF5">
    <property type="entry name" value="LARGE RIBOSOMAL SUBUNIT PROTEIN UL2M"/>
    <property type="match status" value="1"/>
</dbReference>
<dbReference type="PANTHER" id="PTHR13691">
    <property type="entry name" value="RIBOSOMAL PROTEIN L2"/>
    <property type="match status" value="1"/>
</dbReference>
<dbReference type="Pfam" id="PF00181">
    <property type="entry name" value="Ribosomal_L2"/>
    <property type="match status" value="1"/>
</dbReference>
<dbReference type="Pfam" id="PF03947">
    <property type="entry name" value="Ribosomal_L2_C"/>
    <property type="match status" value="1"/>
</dbReference>
<dbReference type="PIRSF" id="PIRSF002158">
    <property type="entry name" value="Ribosomal_L2"/>
    <property type="match status" value="1"/>
</dbReference>
<dbReference type="SMART" id="SM01383">
    <property type="entry name" value="Ribosomal_L2"/>
    <property type="match status" value="1"/>
</dbReference>
<dbReference type="SMART" id="SM01382">
    <property type="entry name" value="Ribosomal_L2_C"/>
    <property type="match status" value="1"/>
</dbReference>
<dbReference type="SUPFAM" id="SSF50249">
    <property type="entry name" value="Nucleic acid-binding proteins"/>
    <property type="match status" value="1"/>
</dbReference>
<dbReference type="SUPFAM" id="SSF50104">
    <property type="entry name" value="Translation proteins SH3-like domain"/>
    <property type="match status" value="1"/>
</dbReference>
<dbReference type="PROSITE" id="PS00467">
    <property type="entry name" value="RIBOSOMAL_L2"/>
    <property type="match status" value="1"/>
</dbReference>
<proteinExistence type="inferred from homology"/>
<evidence type="ECO:0000255" key="1">
    <source>
        <dbReference type="HAMAP-Rule" id="MF_01320"/>
    </source>
</evidence>
<evidence type="ECO:0000256" key="2">
    <source>
        <dbReference type="SAM" id="MobiDB-lite"/>
    </source>
</evidence>
<evidence type="ECO:0000305" key="3"/>
<reference key="1">
    <citation type="journal article" date="2006" name="BMC Genomics">
        <title>Comparative genome analysis: selection pressure on the Borrelia vls cassettes is essential for infectivity.</title>
        <authorList>
            <person name="Gloeckner G."/>
            <person name="Schulte-Spechtel U."/>
            <person name="Schilhabel M."/>
            <person name="Felder M."/>
            <person name="Suehnel J."/>
            <person name="Wilske B."/>
            <person name="Platzer M."/>
        </authorList>
    </citation>
    <scope>NUCLEOTIDE SEQUENCE [LARGE SCALE GENOMIC DNA]</scope>
    <source>
        <strain>PKo</strain>
    </source>
</reference>
<reference key="2">
    <citation type="journal article" date="2011" name="J. Bacteriol.">
        <title>Whole-genome sequences of two Borrelia afzelii and two Borrelia garinii Lyme disease agent isolates.</title>
        <authorList>
            <person name="Casjens S.R."/>
            <person name="Mongodin E.F."/>
            <person name="Qiu W.G."/>
            <person name="Dunn J.J."/>
            <person name="Luft B.J."/>
            <person name="Fraser-Liggett C.M."/>
            <person name="Schutzer S.E."/>
        </authorList>
    </citation>
    <scope>NUCLEOTIDE SEQUENCE [LARGE SCALE GENOMIC DNA]</scope>
    <source>
        <strain>PKo</strain>
    </source>
</reference>
<accession>Q0SN26</accession>
<accession>G0ISC5</accession>
<keyword id="KW-0687">Ribonucleoprotein</keyword>
<keyword id="KW-0689">Ribosomal protein</keyword>
<keyword id="KW-0694">RNA-binding</keyword>
<keyword id="KW-0699">rRNA-binding</keyword>
<gene>
    <name evidence="1" type="primary">rplB</name>
    <name type="ordered locus">BAPKO_0509</name>
    <name type="ordered locus">BafPKo_0498</name>
</gene>
<organism>
    <name type="scientific">Borreliella afzelii (strain PKo)</name>
    <name type="common">Borrelia afzelii</name>
    <dbReference type="NCBI Taxonomy" id="390236"/>
    <lineage>
        <taxon>Bacteria</taxon>
        <taxon>Pseudomonadati</taxon>
        <taxon>Spirochaetota</taxon>
        <taxon>Spirochaetia</taxon>
        <taxon>Spirochaetales</taxon>
        <taxon>Borreliaceae</taxon>
        <taxon>Borreliella</taxon>
    </lineage>
</organism>
<name>RL2_BORAP</name>